<feature type="chain" id="PRO_1000091854" description="3-deoxy-manno-octulosonate cytidylyltransferase">
    <location>
        <begin position="1"/>
        <end position="249"/>
    </location>
</feature>
<evidence type="ECO:0000255" key="1">
    <source>
        <dbReference type="HAMAP-Rule" id="MF_00057"/>
    </source>
</evidence>
<dbReference type="EC" id="2.7.7.38" evidence="1"/>
<dbReference type="EMBL" id="FM178380">
    <property type="protein sequence ID" value="CAQ81486.1"/>
    <property type="molecule type" value="Genomic_DNA"/>
</dbReference>
<dbReference type="RefSeq" id="WP_012552034.1">
    <property type="nucleotide sequence ID" value="NC_011313.1"/>
</dbReference>
<dbReference type="SMR" id="B6ES02"/>
<dbReference type="KEGG" id="vsa:VSAL_II0732"/>
<dbReference type="eggNOG" id="COG1212">
    <property type="taxonomic scope" value="Bacteria"/>
</dbReference>
<dbReference type="HOGENOM" id="CLU_065038_1_0_6"/>
<dbReference type="UniPathway" id="UPA00030"/>
<dbReference type="UniPathway" id="UPA00358">
    <property type="reaction ID" value="UER00476"/>
</dbReference>
<dbReference type="Proteomes" id="UP000001730">
    <property type="component" value="Chromosome 2"/>
</dbReference>
<dbReference type="GO" id="GO:0005829">
    <property type="term" value="C:cytosol"/>
    <property type="evidence" value="ECO:0007669"/>
    <property type="project" value="TreeGrafter"/>
</dbReference>
<dbReference type="GO" id="GO:0008690">
    <property type="term" value="F:3-deoxy-manno-octulosonate cytidylyltransferase activity"/>
    <property type="evidence" value="ECO:0007669"/>
    <property type="project" value="UniProtKB-UniRule"/>
</dbReference>
<dbReference type="GO" id="GO:0033468">
    <property type="term" value="P:CMP-keto-3-deoxy-D-manno-octulosonic acid biosynthetic process"/>
    <property type="evidence" value="ECO:0007669"/>
    <property type="project" value="UniProtKB-UniRule"/>
</dbReference>
<dbReference type="GO" id="GO:0009103">
    <property type="term" value="P:lipopolysaccharide biosynthetic process"/>
    <property type="evidence" value="ECO:0007669"/>
    <property type="project" value="UniProtKB-UniRule"/>
</dbReference>
<dbReference type="CDD" id="cd02517">
    <property type="entry name" value="CMP-KDO-Synthetase"/>
    <property type="match status" value="1"/>
</dbReference>
<dbReference type="FunFam" id="3.90.550.10:FF:000011">
    <property type="entry name" value="3-deoxy-manno-octulosonate cytidylyltransferase"/>
    <property type="match status" value="1"/>
</dbReference>
<dbReference type="Gene3D" id="3.90.550.10">
    <property type="entry name" value="Spore Coat Polysaccharide Biosynthesis Protein SpsA, Chain A"/>
    <property type="match status" value="1"/>
</dbReference>
<dbReference type="HAMAP" id="MF_00057">
    <property type="entry name" value="KdsB"/>
    <property type="match status" value="1"/>
</dbReference>
<dbReference type="InterPro" id="IPR003329">
    <property type="entry name" value="Cytidylyl_trans"/>
</dbReference>
<dbReference type="InterPro" id="IPR004528">
    <property type="entry name" value="KdsB"/>
</dbReference>
<dbReference type="InterPro" id="IPR029044">
    <property type="entry name" value="Nucleotide-diphossugar_trans"/>
</dbReference>
<dbReference type="NCBIfam" id="TIGR00466">
    <property type="entry name" value="kdsB"/>
    <property type="match status" value="1"/>
</dbReference>
<dbReference type="NCBIfam" id="NF003950">
    <property type="entry name" value="PRK05450.1-3"/>
    <property type="match status" value="1"/>
</dbReference>
<dbReference type="NCBIfam" id="NF003952">
    <property type="entry name" value="PRK05450.1-5"/>
    <property type="match status" value="1"/>
</dbReference>
<dbReference type="NCBIfam" id="NF009905">
    <property type="entry name" value="PRK13368.1"/>
    <property type="match status" value="1"/>
</dbReference>
<dbReference type="PANTHER" id="PTHR42866">
    <property type="entry name" value="3-DEOXY-MANNO-OCTULOSONATE CYTIDYLYLTRANSFERASE"/>
    <property type="match status" value="1"/>
</dbReference>
<dbReference type="PANTHER" id="PTHR42866:SF2">
    <property type="entry name" value="3-DEOXY-MANNO-OCTULOSONATE CYTIDYLYLTRANSFERASE, MITOCHONDRIAL"/>
    <property type="match status" value="1"/>
</dbReference>
<dbReference type="Pfam" id="PF02348">
    <property type="entry name" value="CTP_transf_3"/>
    <property type="match status" value="1"/>
</dbReference>
<dbReference type="SUPFAM" id="SSF53448">
    <property type="entry name" value="Nucleotide-diphospho-sugar transferases"/>
    <property type="match status" value="1"/>
</dbReference>
<reference key="1">
    <citation type="journal article" date="2008" name="BMC Genomics">
        <title>The genome sequence of the fish pathogen Aliivibrio salmonicida strain LFI1238 shows extensive evidence of gene decay.</title>
        <authorList>
            <person name="Hjerde E."/>
            <person name="Lorentzen M.S."/>
            <person name="Holden M.T."/>
            <person name="Seeger K."/>
            <person name="Paulsen S."/>
            <person name="Bason N."/>
            <person name="Churcher C."/>
            <person name="Harris D."/>
            <person name="Norbertczak H."/>
            <person name="Quail M.A."/>
            <person name="Sanders S."/>
            <person name="Thurston S."/>
            <person name="Parkhill J."/>
            <person name="Willassen N.P."/>
            <person name="Thomson N.R."/>
        </authorList>
    </citation>
    <scope>NUCLEOTIDE SEQUENCE [LARGE SCALE GENOMIC DNA]</scope>
    <source>
        <strain>LFI1238</strain>
    </source>
</reference>
<comment type="function">
    <text evidence="1">Activates KDO (a required 8-carbon sugar) for incorporation into bacterial lipopolysaccharide in Gram-negative bacteria.</text>
</comment>
<comment type="catalytic activity">
    <reaction evidence="1">
        <text>3-deoxy-alpha-D-manno-oct-2-ulosonate + CTP = CMP-3-deoxy-beta-D-manno-octulosonate + diphosphate</text>
        <dbReference type="Rhea" id="RHEA:23448"/>
        <dbReference type="ChEBI" id="CHEBI:33019"/>
        <dbReference type="ChEBI" id="CHEBI:37563"/>
        <dbReference type="ChEBI" id="CHEBI:85986"/>
        <dbReference type="ChEBI" id="CHEBI:85987"/>
        <dbReference type="EC" id="2.7.7.38"/>
    </reaction>
</comment>
<comment type="pathway">
    <text evidence="1">Nucleotide-sugar biosynthesis; CMP-3-deoxy-D-manno-octulosonate biosynthesis; CMP-3-deoxy-D-manno-octulosonate from 3-deoxy-D-manno-octulosonate and CTP: step 1/1.</text>
</comment>
<comment type="pathway">
    <text evidence="1">Bacterial outer membrane biogenesis; lipopolysaccharide biosynthesis.</text>
</comment>
<comment type="subcellular location">
    <subcellularLocation>
        <location evidence="1">Cytoplasm</location>
    </subcellularLocation>
</comment>
<comment type="similarity">
    <text evidence="1">Belongs to the KdsB family.</text>
</comment>
<gene>
    <name evidence="1" type="primary">kdsB</name>
    <name type="ordered locus">VSAL_II0732</name>
</gene>
<accession>B6ES02</accession>
<protein>
    <recommendedName>
        <fullName evidence="1">3-deoxy-manno-octulosonate cytidylyltransferase</fullName>
        <ecNumber evidence="1">2.7.7.38</ecNumber>
    </recommendedName>
    <alternativeName>
        <fullName evidence="1">CMP-2-keto-3-deoxyoctulosonic acid synthase</fullName>
        <shortName evidence="1">CKS</shortName>
        <shortName evidence="1">CMP-KDO synthase</shortName>
    </alternativeName>
</protein>
<proteinExistence type="inferred from homology"/>
<sequence>MSFTVIIPARYQSTRLPGKPLADICGKPMIQWVYEQASKAGADRVIIATDDSRIEAVVKGFGGDVCMTSPNHESGTERLAEVIDKCGIASNEIVVNVQGDEPLIPPSIIRQVAKNLADSIAPMATLAVTIDEEEDVFNPNAVKVVTDAEGYALYFSRAAIPWDRDAFAKGEALTANPLLRHIGIYAYRAGFINTYINWQPSVLEKIECLEQLRVLWYGEKIHVAVAKEAPAAGVDTQEDLDKVRAILAL</sequence>
<organism>
    <name type="scientific">Aliivibrio salmonicida (strain LFI1238)</name>
    <name type="common">Vibrio salmonicida (strain LFI1238)</name>
    <dbReference type="NCBI Taxonomy" id="316275"/>
    <lineage>
        <taxon>Bacteria</taxon>
        <taxon>Pseudomonadati</taxon>
        <taxon>Pseudomonadota</taxon>
        <taxon>Gammaproteobacteria</taxon>
        <taxon>Vibrionales</taxon>
        <taxon>Vibrionaceae</taxon>
        <taxon>Aliivibrio</taxon>
    </lineage>
</organism>
<name>KDSB_ALISL</name>
<keyword id="KW-0963">Cytoplasm</keyword>
<keyword id="KW-0448">Lipopolysaccharide biosynthesis</keyword>
<keyword id="KW-0548">Nucleotidyltransferase</keyword>
<keyword id="KW-0808">Transferase</keyword>